<feature type="chain" id="PRO_0000460667" description="Non-secreted LysM effector LysM15">
    <location>
        <begin position="1"/>
        <end position="1410"/>
    </location>
</feature>
<feature type="domain" description="LysM 1" evidence="1">
    <location>
        <begin position="1179"/>
        <end position="1225"/>
    </location>
</feature>
<feature type="domain" description="LysM 2" evidence="1">
    <location>
        <begin position="1231"/>
        <end position="1277"/>
    </location>
</feature>
<feature type="domain" description="LysM 3" evidence="1">
    <location>
        <begin position="1328"/>
        <end position="1375"/>
    </location>
</feature>
<feature type="region of interest" description="Disordered" evidence="2">
    <location>
        <begin position="1291"/>
        <end position="1317"/>
    </location>
</feature>
<feature type="compositionally biased region" description="Low complexity" evidence="2">
    <location>
        <begin position="1291"/>
        <end position="1303"/>
    </location>
</feature>
<keyword id="KW-0147">Chitin-binding</keyword>
<keyword id="KW-1185">Reference proteome</keyword>
<keyword id="KW-0677">Repeat</keyword>
<keyword id="KW-0843">Virulence</keyword>
<comment type="function">
    <text evidence="6">Non-secreted LysM effector that might be involved in manipulation of host defenses for successful infection.</text>
</comment>
<comment type="domain">
    <text evidence="6">The LysM (lysin motif) domains are small globular domains involved in binding chitin in eukaryotes. LysM14 contains one LysM domain.</text>
</comment>
<comment type="disruption phenotype">
    <text evidence="3">Leads to enhanced fungal virulence, with faster decaying on infected fruits (PubMed:32656702). Activates expression of several core effector genes, such as PEX2_055830, PEX2_036960 and PEX2_108150, and a chitin-binding protein, PEX2_064520 (PubMed:32656702).</text>
</comment>
<comment type="similarity">
    <text evidence="5">Belongs to the secreted LysM effector family.</text>
</comment>
<sequence>MPPHPNTTKENIPSLVKATPGAQSLRWMLLFAFLCSLVGNAYGTHHQHHGHQHLHHQVRDVKASATPTVTSSSSSSLPSTLEEAKEIIKNAQASLAVMNKGRLAYPQWNQYIAQPKSKNGTSPVAPALGTEHLATNHAMIAKIALNESKTEDQSSQKFSYTIPSGVAHAAKLVAEASPQSPGSHGVDIAAIRRKYRPQRNDTNRPAQKYAQSNGLDGYVHAQAPMNSALDSDSGDDESQLTKRSSADFWLTTMTQRGSSPYAPEGYKVWRNVKEYGAKGDGVTDDTAAINLAVSDGGRCGADCGSSTIYPAQVYFPPGTYLVSSPIIQYFNTEFLGNPLDYPTILAASSFVGLGVITSDVYTGDTTEWYINTNNFLRSVRNFNVDVTRTPQDAYVCGIHWQVAQGTSLENMVFYMSQDAATTQQGVYMENGSGGFITNLTFVGGNFGAYFGNQQFTTSELTFINAKNALQVHWDWAWTMQDVIIENCVNGLVIVGGAGGSMSTGQSVGSLILMDALIVNATNGIVTSLFAENSTSFLLQNSVFRDVTTAVLDSAQGTEILAGGAAFGVESWGFGRVATSSTNSTFYNGQDIPVMERPVSLTYMGYDKPNFFQRRRPAYTNIGNTQIIDVKEWGAAGDGTTNDGPILNSILDRAANLSAIVFIPHGIYIVEDTLHIPVGSRIIGQAWSQIMMKGSKFENQLKPRVGVQVGQVGDVGIIEIQSLLFTVSGPTAGAVLVEWNVHQSTQGSAAMWDSHFRVGGAKGSSLQTSQCDKSDTAVNTACVAASLLLHITSQSSAYLENIWAWTADHDLDTTAQEQINIYSGRGILVESQGPTWLYGTSSEHNVLYQYQVSNAKDLYMGMIQTESPYFQPTPHAPQPFKAGLFSNDPVFADCDSSSANCFASWALRIIDSSSVYIMGTEDCQQRAFEISQSTDTWIYNLVTKGIVEMISPVNEDPTLAANNVNGFMSSILAWVRGSNSTIGERTFPGFQIYTADSLEGQGLTESCTPALTQKVLCSPFLKTWTSPGIGQYYKNTTFTDMLCDAGCGESLGSYVDNVETYCANQTIGSSIPTRNGGTIYHNYNLTCLEDKDTKEYCLDTIMDFTTVESAKDMPTNELCSYCYTTMLEMRQASIYSSYTESDKETLELIQSTCGLTGPTELHDPPYTVTPTPDPVCVSNTTYTTQPGDTCDKLAKQYSVASAAILYANPTIIGNCSDLPASRDICMPLGCDTQYTLQDDDNCWQLQRDYGLGPDSIRQYNPWLDSDCLNMQGAREILGSVLCLSPQGATHNTTGDGITTTPGNGEYAQGVVSPPENSTVAPGTTTKCGRWYSATADDLCVQICLKSGVSAKLFKAANPSLAADCDNSLIAGDAYCVGPVPRWNDTAYWIETATSSKAVSTPLASAKATGSV</sequence>
<protein>
    <recommendedName>
        <fullName evidence="4">Non-secreted LysM effector LysM15</fullName>
    </recommendedName>
    <alternativeName>
        <fullName evidence="4">LysM domain-containing protein 15</fullName>
    </alternativeName>
</protein>
<reference key="1">
    <citation type="journal article" date="2015" name="Mol. Plant Microbe Interact.">
        <title>Genome, transcriptome, and functional analyses of Penicillium expansum provide new insights into secondary metabolism and pathogenicity.</title>
        <authorList>
            <person name="Ballester A.R."/>
            <person name="Marcet-Houben M."/>
            <person name="Levin E."/>
            <person name="Sela N."/>
            <person name="Selma-Lazaro C."/>
            <person name="Carmona L."/>
            <person name="Wisniewski M."/>
            <person name="Droby S."/>
            <person name="Gonzalez-Candelas L."/>
            <person name="Gabaldon T."/>
        </authorList>
    </citation>
    <scope>NUCLEOTIDE SEQUENCE [LARGE SCALE GENOMIC DNA]</scope>
    <source>
        <strain>MD-8</strain>
    </source>
</reference>
<reference key="2">
    <citation type="journal article" date="2020" name="Mol. Genet. Genomics">
        <title>Multiple transcriptomic analyses and characterization of pathogen-related core effectors and LysM family members reveal their differential roles in fungal growth and pathogenicity in Penicillium expansum.</title>
        <authorList>
            <person name="Chen D."/>
            <person name="Li G."/>
            <person name="Liu J."/>
            <person name="Wisniewski M."/>
            <person name="Droby S."/>
            <person name="Levin E."/>
            <person name="Huang S."/>
            <person name="Liu Y."/>
        </authorList>
    </citation>
    <scope>FUNCTION</scope>
    <scope>DISRUPTION PHENOTYPE</scope>
    <scope>DOMAIN</scope>
</reference>
<organism>
    <name type="scientific">Penicillium expansum</name>
    <name type="common">Blue mold rot fungus</name>
    <dbReference type="NCBI Taxonomy" id="27334"/>
    <lineage>
        <taxon>Eukaryota</taxon>
        <taxon>Fungi</taxon>
        <taxon>Dikarya</taxon>
        <taxon>Ascomycota</taxon>
        <taxon>Pezizomycotina</taxon>
        <taxon>Eurotiomycetes</taxon>
        <taxon>Eurotiomycetidae</taxon>
        <taxon>Eurotiales</taxon>
        <taxon>Aspergillaceae</taxon>
        <taxon>Penicillium</taxon>
    </lineage>
</organism>
<accession>A0A0A2KPB9</accession>
<evidence type="ECO:0000255" key="1">
    <source>
        <dbReference type="PROSITE-ProRule" id="PRU01118"/>
    </source>
</evidence>
<evidence type="ECO:0000256" key="2">
    <source>
        <dbReference type="SAM" id="MobiDB-lite"/>
    </source>
</evidence>
<evidence type="ECO:0000269" key="3">
    <source>
    </source>
</evidence>
<evidence type="ECO:0000303" key="4">
    <source>
    </source>
</evidence>
<evidence type="ECO:0000305" key="5"/>
<evidence type="ECO:0000305" key="6">
    <source>
    </source>
</evidence>
<gene>
    <name evidence="4" type="primary">LysM15</name>
    <name type="ORF">PEX2_101830</name>
</gene>
<dbReference type="EMBL" id="JQFZ01000051">
    <property type="protein sequence ID" value="KGO61104.1"/>
    <property type="molecule type" value="Genomic_DNA"/>
</dbReference>
<dbReference type="RefSeq" id="XP_016602001.1">
    <property type="nucleotide sequence ID" value="XM_016747453.1"/>
</dbReference>
<dbReference type="SMR" id="A0A0A2KPB9"/>
<dbReference type="STRING" id="27334.A0A0A2KPB9"/>
<dbReference type="GeneID" id="27682873"/>
<dbReference type="VEuPathDB" id="FungiDB:PEXP_015380"/>
<dbReference type="HOGENOM" id="CLU_002540_4_1_1"/>
<dbReference type="OrthoDB" id="1046782at2759"/>
<dbReference type="PhylomeDB" id="A0A0A2KPB9"/>
<dbReference type="Proteomes" id="UP000030143">
    <property type="component" value="Unassembled WGS sequence"/>
</dbReference>
<dbReference type="GO" id="GO:0008061">
    <property type="term" value="F:chitin binding"/>
    <property type="evidence" value="ECO:0007669"/>
    <property type="project" value="UniProtKB-KW"/>
</dbReference>
<dbReference type="CDD" id="cd23668">
    <property type="entry name" value="GH55_beta13glucanase-like"/>
    <property type="match status" value="1"/>
</dbReference>
<dbReference type="CDD" id="cd00118">
    <property type="entry name" value="LysM"/>
    <property type="match status" value="2"/>
</dbReference>
<dbReference type="Gene3D" id="3.10.350.10">
    <property type="entry name" value="LysM domain"/>
    <property type="match status" value="3"/>
</dbReference>
<dbReference type="Gene3D" id="2.160.20.10">
    <property type="entry name" value="Single-stranded right-handed beta-helix, Pectin lyase-like"/>
    <property type="match status" value="2"/>
</dbReference>
<dbReference type="InterPro" id="IPR052210">
    <property type="entry name" value="LysM1-like"/>
</dbReference>
<dbReference type="InterPro" id="IPR018392">
    <property type="entry name" value="LysM_dom"/>
</dbReference>
<dbReference type="InterPro" id="IPR036779">
    <property type="entry name" value="LysM_dom_sf"/>
</dbReference>
<dbReference type="InterPro" id="IPR012334">
    <property type="entry name" value="Pectin_lyas_fold"/>
</dbReference>
<dbReference type="InterPro" id="IPR011050">
    <property type="entry name" value="Pectin_lyase_fold/virulence"/>
</dbReference>
<dbReference type="InterPro" id="IPR024535">
    <property type="entry name" value="RHGA/B-epi-like_pectate_lyase"/>
</dbReference>
<dbReference type="PANTHER" id="PTHR34997">
    <property type="entry name" value="AM15"/>
    <property type="match status" value="1"/>
</dbReference>
<dbReference type="PANTHER" id="PTHR34997:SF16">
    <property type="entry name" value="LYSM DOMAIN-CONTAINING PROTEIN"/>
    <property type="match status" value="1"/>
</dbReference>
<dbReference type="Pfam" id="PF01476">
    <property type="entry name" value="LysM"/>
    <property type="match status" value="1"/>
</dbReference>
<dbReference type="Pfam" id="PF12708">
    <property type="entry name" value="Pect-lyase_RHGA_epim"/>
    <property type="match status" value="2"/>
</dbReference>
<dbReference type="SMART" id="SM00257">
    <property type="entry name" value="LysM"/>
    <property type="match status" value="3"/>
</dbReference>
<dbReference type="SUPFAM" id="SSF51126">
    <property type="entry name" value="Pectin lyase-like"/>
    <property type="match status" value="2"/>
</dbReference>
<dbReference type="PROSITE" id="PS51782">
    <property type="entry name" value="LYSM"/>
    <property type="match status" value="2"/>
</dbReference>
<name>LYS15_PENEN</name>
<proteinExistence type="inferred from homology"/>